<proteinExistence type="evidence at protein level"/>
<evidence type="ECO:0000250" key="1">
    <source>
        <dbReference type="UniProtKB" id="P04798"/>
    </source>
</evidence>
<evidence type="ECO:0000255" key="2"/>
<evidence type="ECO:0000255" key="3">
    <source>
        <dbReference type="PROSITE-ProRule" id="PRU00498"/>
    </source>
</evidence>
<evidence type="ECO:0000269" key="4">
    <source>
    </source>
</evidence>
<evidence type="ECO:0000303" key="5">
    <source>
    </source>
</evidence>
<evidence type="ECO:0000305" key="6"/>
<evidence type="ECO:0000305" key="7">
    <source>
    </source>
</evidence>
<sequence>MLATDSTPALLAASVVLAVSLVSYVIQLNRSRTHRAFWASHPWVGVRDEWFSGARTKLRIVTSVREMVEDGFHRFSQFKTAFALPNIGEPPWLVLPPASLREFLAKPDADLDHNIIHEEQLQNYYTQGALGHHAATIPLQFDVVRRQLTRELPLVAAALHDELHKSFQDYWGTDTIAAKQIDLLATCFKIVTRTANRVFIGADICRSEAFLEHLRRYSDAVGRAGIIIRLFPRWLRPVVTPAVTVWYRRDLAVCREICVPVIRCRVQQTIEKRKDVDCTWKAPVDVLQWLIEAALRRNDAAELDPLLLTQRLLMLNFVSIETTSMAITHAIADLYGSADADSFIAGLQEECERALPHGELWTKAQLDNLVRIDSAIRESMRVSDFSHIQLPRLVANPHGVDFQSTGNPPLHVPPGIRLCVPAHSIHRDPALYPDPLTYNAFRFVIEPSVGAGDATEPAPKQASLATTTDSFLVFGHGRHACPGRFFAAHLMKLMLAYIVRHYDVARLTQPVDKQTTECTKAPFHMEYGGGPLAYMGHSLTGATRLQDTLCFMKFDSSQYLDTSPIVTIPSYIYWPSLNTMNQSSKYSLYVFVVLVACVAALFIGIGIYQMYHPLDRDNAAYREVPHEQRAYMRKAGSPPAFSKFIYRLYCPNIQWKVKRCIGVLFLLFAYYNSRLRLSSATKN</sequence>
<accession>K0E690</accession>
<protein>
    <recommendedName>
        <fullName evidence="5">Cytochrome P450 monooxygenase htyF</fullName>
        <ecNumber evidence="7">1.-.-.-</ecNumber>
    </recommendedName>
    <alternativeName>
        <fullName evidence="5">L-homotyrosine biosynthetic cluster protein A</fullName>
    </alternativeName>
</protein>
<name>HTYF_ASPRU</name>
<organism>
    <name type="scientific">Aspergillus rugulosus</name>
    <name type="common">Emericella rugulosa</name>
    <dbReference type="NCBI Taxonomy" id="41736"/>
    <lineage>
        <taxon>Eukaryota</taxon>
        <taxon>Fungi</taxon>
        <taxon>Dikarya</taxon>
        <taxon>Ascomycota</taxon>
        <taxon>Pezizomycotina</taxon>
        <taxon>Eurotiomycetes</taxon>
        <taxon>Eurotiomycetidae</taxon>
        <taxon>Eurotiales</taxon>
        <taxon>Aspergillaceae</taxon>
        <taxon>Aspergillus</taxon>
        <taxon>Aspergillus subgen. Nidulantes</taxon>
    </lineage>
</organism>
<comment type="function">
    <text evidence="4">Cytochrome P450 monooxygenase; part of the gene cluster that mediates the de novo generation of L-homotyrosine from acetyl-CoA and 4-hydroxyphenyl-pyruvate (PubMed:22998630). L-homotyrosine is a building block of echinocandin B, a fungal lipidated cyclic hexapeptide that acts as an antifungal agent (PubMed:22998630). L-homotyrosine 4-hydroxyphenyl-pyruvate first undergoes an aldol-type condensation by htyA with the C-2 of acetyl-CoA followed by the release of CoA to form 2-(4-hydroxybenzyl)-malate (PubMed:22998630). This is followed by isomerization of 2-(4-hydroxy-benzyl)-malate to 3-(4-hydroxybenzyl)-malate by htyD (PubMed:22998630). Thereafter, 3-(4-hydroxybenzyl)-malate undergoes decarboxylation and oxidation to form 2-oxo-4-(4-hydroxybenzyl)butanoic acid, coupled to reduction of NAD(+) to NADH by htyC (PubMed:22998630). The product then undergoes transamination catalyzed by htyB to form L-homotyrosine (PubMed:22998630).</text>
</comment>
<comment type="cofactor">
    <cofactor evidence="1">
        <name>heme</name>
        <dbReference type="ChEBI" id="CHEBI:30413"/>
    </cofactor>
</comment>
<comment type="pathway">
    <text evidence="7">Antifungal biosynthesis.</text>
</comment>
<comment type="subcellular location">
    <subcellularLocation>
        <location evidence="2">Membrane</location>
        <topology evidence="2">Multi-pass membrane protein</topology>
    </subcellularLocation>
</comment>
<comment type="biotechnology">
    <text evidence="4">Due to their effectiveness as antifungal agents, echinocandin derivatives can be used for the treatment of human invasive candidiasis (PubMed:22998630).</text>
</comment>
<comment type="similarity">
    <text evidence="6">Belongs to the cytochrome P450 family.</text>
</comment>
<keyword id="KW-0325">Glycoprotein</keyword>
<keyword id="KW-0349">Heme</keyword>
<keyword id="KW-0408">Iron</keyword>
<keyword id="KW-0472">Membrane</keyword>
<keyword id="KW-0479">Metal-binding</keyword>
<keyword id="KW-0503">Monooxygenase</keyword>
<keyword id="KW-0560">Oxidoreductase</keyword>
<keyword id="KW-0812">Transmembrane</keyword>
<keyword id="KW-1133">Transmembrane helix</keyword>
<dbReference type="EC" id="1.-.-.-" evidence="7"/>
<dbReference type="EMBL" id="JX421685">
    <property type="protein sequence ID" value="AFT91399.1"/>
    <property type="molecule type" value="Genomic_DNA"/>
</dbReference>
<dbReference type="GlyCosmos" id="K0E690">
    <property type="glycosylation" value="2 sites, No reported glycans"/>
</dbReference>
<dbReference type="GO" id="GO:0016020">
    <property type="term" value="C:membrane"/>
    <property type="evidence" value="ECO:0007669"/>
    <property type="project" value="UniProtKB-SubCell"/>
</dbReference>
<dbReference type="GO" id="GO:0020037">
    <property type="term" value="F:heme binding"/>
    <property type="evidence" value="ECO:0007669"/>
    <property type="project" value="InterPro"/>
</dbReference>
<dbReference type="GO" id="GO:0005506">
    <property type="term" value="F:iron ion binding"/>
    <property type="evidence" value="ECO:0007669"/>
    <property type="project" value="InterPro"/>
</dbReference>
<dbReference type="GO" id="GO:0004497">
    <property type="term" value="F:monooxygenase activity"/>
    <property type="evidence" value="ECO:0007669"/>
    <property type="project" value="UniProtKB-KW"/>
</dbReference>
<dbReference type="GO" id="GO:0016705">
    <property type="term" value="F:oxidoreductase activity, acting on paired donors, with incorporation or reduction of molecular oxygen"/>
    <property type="evidence" value="ECO:0007669"/>
    <property type="project" value="InterPro"/>
</dbReference>
<dbReference type="GO" id="GO:0019748">
    <property type="term" value="P:secondary metabolic process"/>
    <property type="evidence" value="ECO:0007669"/>
    <property type="project" value="UniProtKB-ARBA"/>
</dbReference>
<dbReference type="CDD" id="cd11041">
    <property type="entry name" value="CYP503A1-like"/>
    <property type="match status" value="1"/>
</dbReference>
<dbReference type="Gene3D" id="1.10.630.10">
    <property type="entry name" value="Cytochrome P450"/>
    <property type="match status" value="1"/>
</dbReference>
<dbReference type="InterPro" id="IPR001128">
    <property type="entry name" value="Cyt_P450"/>
</dbReference>
<dbReference type="InterPro" id="IPR017972">
    <property type="entry name" value="Cyt_P450_CS"/>
</dbReference>
<dbReference type="InterPro" id="IPR002403">
    <property type="entry name" value="Cyt_P450_E_grp-IV"/>
</dbReference>
<dbReference type="InterPro" id="IPR036396">
    <property type="entry name" value="Cyt_P450_sf"/>
</dbReference>
<dbReference type="PANTHER" id="PTHR46206">
    <property type="entry name" value="CYTOCHROME P450"/>
    <property type="match status" value="1"/>
</dbReference>
<dbReference type="PANTHER" id="PTHR46206:SF1">
    <property type="entry name" value="P450, PUTATIVE (EUROFUNG)-RELATED"/>
    <property type="match status" value="1"/>
</dbReference>
<dbReference type="Pfam" id="PF00067">
    <property type="entry name" value="p450"/>
    <property type="match status" value="1"/>
</dbReference>
<dbReference type="PRINTS" id="PR00465">
    <property type="entry name" value="EP450IV"/>
</dbReference>
<dbReference type="SUPFAM" id="SSF48264">
    <property type="entry name" value="Cytochrome P450"/>
    <property type="match status" value="1"/>
</dbReference>
<dbReference type="PROSITE" id="PS00086">
    <property type="entry name" value="CYTOCHROME_P450"/>
    <property type="match status" value="1"/>
</dbReference>
<feature type="chain" id="PRO_0000443833" description="Cytochrome P450 monooxygenase htyF">
    <location>
        <begin position="1"/>
        <end position="683"/>
    </location>
</feature>
<feature type="transmembrane region" description="Helical" evidence="2">
    <location>
        <begin position="8"/>
        <end position="28"/>
    </location>
</feature>
<feature type="transmembrane region" description="Helical" evidence="2">
    <location>
        <begin position="588"/>
        <end position="608"/>
    </location>
</feature>
<feature type="binding site" description="axial binding residue" evidence="1">
    <location>
        <position position="481"/>
    </location>
    <ligand>
        <name>heme</name>
        <dbReference type="ChEBI" id="CHEBI:30413"/>
    </ligand>
    <ligandPart>
        <name>Fe</name>
        <dbReference type="ChEBI" id="CHEBI:18248"/>
    </ligandPart>
</feature>
<feature type="glycosylation site" description="N-linked (GlcNAc...) asparagine" evidence="3">
    <location>
        <position position="29"/>
    </location>
</feature>
<feature type="glycosylation site" description="N-linked (GlcNAc...) asparagine" evidence="3">
    <location>
        <position position="581"/>
    </location>
</feature>
<reference key="1">
    <citation type="journal article" date="2012" name="J. Am. Chem. Soc.">
        <title>Identification and characterization of the echinocandin B biosynthetic gene cluster from Emericella rugulosa NRRL 11440.</title>
        <authorList>
            <person name="Cacho R.A."/>
            <person name="Jiang W."/>
            <person name="Chooi Y.H."/>
            <person name="Walsh C.T."/>
            <person name="Tang Y."/>
        </authorList>
    </citation>
    <scope>NUCLEOTIDE SEQUENCE [GENOMIC DNA]</scope>
    <scope>FUNCTION</scope>
    <scope>PATHWAY</scope>
    <scope>BIOTECHNOLOGY</scope>
    <source>
        <strain>ATCC 58397 / NRRL 11440</strain>
    </source>
</reference>
<gene>
    <name evidence="5" type="primary">htyF</name>
</gene>